<gene>
    <name evidence="8" type="primary">dpy-17</name>
    <name evidence="8" type="ORF">F54D8.1</name>
</gene>
<feature type="signal peptide" evidence="1">
    <location>
        <begin position="1"/>
        <end position="29"/>
    </location>
</feature>
<feature type="chain" id="PRO_5004198984" description="Cuticle collagen dpy-17" evidence="1">
    <location>
        <begin position="30"/>
        <end position="352"/>
    </location>
</feature>
<feature type="domain" description="Collagen-like" evidence="1">
    <location>
        <begin position="202"/>
        <end position="259"/>
    </location>
</feature>
<feature type="region of interest" description="Furin-like endopeptidase recognition region" evidence="4">
    <location>
        <begin position="61"/>
        <end position="64"/>
    </location>
</feature>
<feature type="region of interest" description="Disordered" evidence="2">
    <location>
        <begin position="73"/>
        <end position="143"/>
    </location>
</feature>
<feature type="region of interest" description="Disordered" evidence="2">
    <location>
        <begin position="156"/>
        <end position="352"/>
    </location>
</feature>
<feature type="region of interest" description="Triple-helical region" evidence="5">
    <location>
        <begin position="156"/>
        <end position="182"/>
    </location>
</feature>
<feature type="region of interest" description="Triple-helical region" evidence="5">
    <location>
        <begin position="202"/>
        <end position="264"/>
    </location>
</feature>
<feature type="region of interest" description="Triple-helical region" evidence="5">
    <location>
        <begin position="267"/>
        <end position="290"/>
    </location>
</feature>
<feature type="region of interest" description="Triple-helical region" evidence="5">
    <location>
        <begin position="294"/>
        <end position="329"/>
    </location>
</feature>
<feature type="compositionally biased region" description="Gly residues" evidence="2">
    <location>
        <begin position="87"/>
        <end position="97"/>
    </location>
</feature>
<feature type="compositionally biased region" description="Low complexity" evidence="2">
    <location>
        <begin position="207"/>
        <end position="259"/>
    </location>
</feature>
<feature type="compositionally biased region" description="Polar residues" evidence="2">
    <location>
        <begin position="337"/>
        <end position="352"/>
    </location>
</feature>
<feature type="mutagenesis site" description="Forms large puncta; fails to secrete and incorporate into the cuticle." evidence="3">
    <original>RVRR</original>
    <variation>AVAA</variation>
    <location>
        <begin position="61"/>
        <end position="64"/>
    </location>
</feature>
<evidence type="ECO:0000255" key="1"/>
<evidence type="ECO:0000256" key="2">
    <source>
        <dbReference type="SAM" id="MobiDB-lite"/>
    </source>
</evidence>
<evidence type="ECO:0000269" key="3">
    <source>
    </source>
</evidence>
<evidence type="ECO:0000303" key="4">
    <source>
    </source>
</evidence>
<evidence type="ECO:0000305" key="5"/>
<evidence type="ECO:0000305" key="6">
    <source>
    </source>
</evidence>
<evidence type="ECO:0000312" key="7">
    <source>
        <dbReference type="Proteomes" id="UP000001940"/>
    </source>
</evidence>
<evidence type="ECO:0000312" key="8">
    <source>
        <dbReference type="WormBase" id="F54D8.1"/>
    </source>
</evidence>
<dbReference type="EMBL" id="BX284603">
    <property type="protein sequence ID" value="CCD67406.1"/>
    <property type="molecule type" value="Genomic_DNA"/>
</dbReference>
<dbReference type="RefSeq" id="NP_498086.1">
    <property type="nucleotide sequence ID" value="NM_065685.9"/>
</dbReference>
<dbReference type="SMR" id="Q20778"/>
<dbReference type="DIP" id="DIP-26150N"/>
<dbReference type="FunCoup" id="Q20778">
    <property type="interactions" value="1395"/>
</dbReference>
<dbReference type="STRING" id="6239.F54D8.1.1"/>
<dbReference type="PaxDb" id="6239-F54D8.1"/>
<dbReference type="PeptideAtlas" id="Q20778"/>
<dbReference type="EnsemblMetazoa" id="F54D8.1.1">
    <property type="protein sequence ID" value="F54D8.1.1"/>
    <property type="gene ID" value="WBGene00001076"/>
</dbReference>
<dbReference type="GeneID" id="175696"/>
<dbReference type="KEGG" id="cel:CELE_F54D8.1"/>
<dbReference type="UCSC" id="F54D8.1.1">
    <property type="organism name" value="c. elegans"/>
</dbReference>
<dbReference type="AGR" id="WB:WBGene00001076"/>
<dbReference type="CTD" id="175696"/>
<dbReference type="WormBase" id="F54D8.1">
    <property type="protein sequence ID" value="CE11066"/>
    <property type="gene ID" value="WBGene00001076"/>
    <property type="gene designation" value="dpy-17"/>
</dbReference>
<dbReference type="eggNOG" id="KOG3544">
    <property type="taxonomic scope" value="Eukaryota"/>
</dbReference>
<dbReference type="HOGENOM" id="CLU_001074_4_4_1"/>
<dbReference type="InParanoid" id="Q20778"/>
<dbReference type="OMA" id="TGPCSWP"/>
<dbReference type="OrthoDB" id="5983381at2759"/>
<dbReference type="PhylomeDB" id="Q20778"/>
<dbReference type="Proteomes" id="UP000001940">
    <property type="component" value="Chromosome III"/>
</dbReference>
<dbReference type="Bgee" id="WBGene00001076">
    <property type="expression patterns" value="Expressed in pharyngeal muscle cell (C elegans) and 4 other cell types or tissues"/>
</dbReference>
<dbReference type="GO" id="GO:0005581">
    <property type="term" value="C:collagen trimer"/>
    <property type="evidence" value="ECO:0007669"/>
    <property type="project" value="UniProtKB-KW"/>
</dbReference>
<dbReference type="GO" id="GO:0005576">
    <property type="term" value="C:extracellular region"/>
    <property type="evidence" value="ECO:0007669"/>
    <property type="project" value="UniProtKB-SubCell"/>
</dbReference>
<dbReference type="GO" id="GO:0042302">
    <property type="term" value="F:structural constituent of cuticle"/>
    <property type="evidence" value="ECO:0007669"/>
    <property type="project" value="InterPro"/>
</dbReference>
<dbReference type="GO" id="GO:0042338">
    <property type="term" value="P:cuticle development involved in collagen and cuticulin-based cuticle molting cycle"/>
    <property type="evidence" value="ECO:0000315"/>
    <property type="project" value="WormBase"/>
</dbReference>
<dbReference type="InterPro" id="IPR002486">
    <property type="entry name" value="Col_cuticle_N"/>
</dbReference>
<dbReference type="InterPro" id="IPR008160">
    <property type="entry name" value="Collagen"/>
</dbReference>
<dbReference type="PANTHER" id="PTHR24637">
    <property type="entry name" value="COLLAGEN"/>
    <property type="match status" value="1"/>
</dbReference>
<dbReference type="PANTHER" id="PTHR24637:SF421">
    <property type="entry name" value="CUTICLE COLLAGEN DPY-2"/>
    <property type="match status" value="1"/>
</dbReference>
<dbReference type="Pfam" id="PF01484">
    <property type="entry name" value="Col_cuticle_N"/>
    <property type="match status" value="1"/>
</dbReference>
<dbReference type="Pfam" id="PF01391">
    <property type="entry name" value="Collagen"/>
    <property type="match status" value="1"/>
</dbReference>
<dbReference type="SMART" id="SM01088">
    <property type="entry name" value="Col_cuticle_N"/>
    <property type="match status" value="1"/>
</dbReference>
<accession>Q20778</accession>
<protein>
    <recommendedName>
        <fullName evidence="4">Cuticle collagen dpy-17</fullName>
    </recommendedName>
    <alternativeName>
        <fullName evidence="5">Protein dumpy-17</fullName>
    </alternativeName>
</protein>
<name>DPY17_CAEEL</name>
<sequence>MSVFAGYAACTLGAVSMLLCVSLVPQVYQQVSMLRDELTTEMEAWRLESDQIYMDMQKFGRVRRQAGGYGGYGGYGSGPSGPSGPSGPHGGFPGGPQGHFPGNTGSSNTPTLPGVIGVPPSVTGHPGGSPINPDGSPSAGPGDKCNCNTENSCPAGPAGPKGTPGHDGPDGIPGVPGVDGEDADDAKAQTQQYDGCFTCPAGPQGPPGSQGKPGARGMRGARGQAAMPGRDGSPGMPGSLGPIGPPGAAGEEGPTGEPGADVEHQIGLPGAKGTPGAPGESGDQGEQGDRGATGIAGPPGERGPQGEKGDDGPNGAAGSPGEEGEPGQDAQYCPCPQRNTNAAVSGNQGYRN</sequence>
<proteinExistence type="evidence at protein level"/>
<comment type="function">
    <text evidence="3">Secreted collagen that forms part of the nematode cuticle, which functions as an exoskeleton and a barrier to protect the worm from its environment (PubMed:37721936). Secretion and subsequent incorporation into the cuticle is likely mediated by bli-4, which probably cleaves at the N-terminal consensus furin cleavage site (PubMed:37721936).</text>
</comment>
<comment type="subunit">
    <text evidence="5">Collagen polypeptide chains are complexed within the cuticle by disulfide bonds and other types of covalent cross-links.</text>
</comment>
<comment type="subcellular location">
    <subcellularLocation>
        <location evidence="3">Secreted</location>
        <location evidence="3">Extracellular space</location>
    </subcellularLocation>
</comment>
<comment type="similarity">
    <text evidence="6">Belongs to the cuticular collagen family.</text>
</comment>
<reference evidence="7" key="1">
    <citation type="journal article" date="1998" name="Science">
        <title>Genome sequence of the nematode C. elegans: a platform for investigating biology.</title>
        <authorList>
            <consortium name="The C. elegans sequencing consortium"/>
        </authorList>
    </citation>
    <scope>NUCLEOTIDE SEQUENCE [LARGE SCALE GENOMIC DNA]</scope>
    <source>
        <strain evidence="7">Bristol N2</strain>
    </source>
</reference>
<reference evidence="5" key="2">
    <citation type="journal article" date="2023" name="PLoS Genet.">
        <title>The proprotein convertase BLI-4 promotes collagen secretion prior to assembly of the Caenorhabditis elegans cuticle.</title>
        <authorList>
            <person name="Birnbaum S.K."/>
            <person name="Cohen J.D."/>
            <person name="Belfi A."/>
            <person name="Murray J.I."/>
            <person name="Adams J.R.G."/>
            <person name="Chisholm A.D."/>
            <person name="Sundaram M.V."/>
        </authorList>
    </citation>
    <scope>FUNCTION</scope>
    <scope>SUBCELLULAR LOCATION</scope>
    <scope>MUTAGENESIS OF 61-ARG--ARG-64</scope>
</reference>
<keyword id="KW-0176">Collagen</keyword>
<keyword id="KW-1015">Disulfide bond</keyword>
<keyword id="KW-1185">Reference proteome</keyword>
<keyword id="KW-0677">Repeat</keyword>
<keyword id="KW-0964">Secreted</keyword>
<keyword id="KW-0732">Signal</keyword>
<organism evidence="7">
    <name type="scientific">Caenorhabditis elegans</name>
    <dbReference type="NCBI Taxonomy" id="6239"/>
    <lineage>
        <taxon>Eukaryota</taxon>
        <taxon>Metazoa</taxon>
        <taxon>Ecdysozoa</taxon>
        <taxon>Nematoda</taxon>
        <taxon>Chromadorea</taxon>
        <taxon>Rhabditida</taxon>
        <taxon>Rhabditina</taxon>
        <taxon>Rhabditomorpha</taxon>
        <taxon>Rhabditoidea</taxon>
        <taxon>Rhabditidae</taxon>
        <taxon>Peloderinae</taxon>
        <taxon>Caenorhabditis</taxon>
    </lineage>
</organism>